<name>GATC_PSEAE</name>
<proteinExistence type="evidence at protein level"/>
<keyword id="KW-0002">3D-structure</keyword>
<keyword id="KW-0067">ATP-binding</keyword>
<keyword id="KW-0436">Ligase</keyword>
<keyword id="KW-0547">Nucleotide-binding</keyword>
<keyword id="KW-0648">Protein biosynthesis</keyword>
<keyword id="KW-1185">Reference proteome</keyword>
<comment type="function">
    <text evidence="1">Allows the formation of correctly charged Asn-tRNA(Asn) or Gln-tRNA(Gln) through the transamidation of misacylated Asp-tRNA(Asn) or Glu-tRNA(Gln) in organisms which lack either or both of asparaginyl-tRNA or glutaminyl-tRNA synthetases. The reaction takes place in the presence of glutamine and ATP through an activated phospho-Asp-tRNA(Asn) or phospho-Glu-tRNA(Gln).</text>
</comment>
<comment type="catalytic activity">
    <reaction evidence="1">
        <text>L-glutamyl-tRNA(Gln) + L-glutamine + ATP + H2O = L-glutaminyl-tRNA(Gln) + L-glutamate + ADP + phosphate + H(+)</text>
        <dbReference type="Rhea" id="RHEA:17521"/>
        <dbReference type="Rhea" id="RHEA-COMP:9681"/>
        <dbReference type="Rhea" id="RHEA-COMP:9684"/>
        <dbReference type="ChEBI" id="CHEBI:15377"/>
        <dbReference type="ChEBI" id="CHEBI:15378"/>
        <dbReference type="ChEBI" id="CHEBI:29985"/>
        <dbReference type="ChEBI" id="CHEBI:30616"/>
        <dbReference type="ChEBI" id="CHEBI:43474"/>
        <dbReference type="ChEBI" id="CHEBI:58359"/>
        <dbReference type="ChEBI" id="CHEBI:78520"/>
        <dbReference type="ChEBI" id="CHEBI:78521"/>
        <dbReference type="ChEBI" id="CHEBI:456216"/>
    </reaction>
</comment>
<comment type="catalytic activity">
    <reaction evidence="1">
        <text>L-aspartyl-tRNA(Asn) + L-glutamine + ATP + H2O = L-asparaginyl-tRNA(Asn) + L-glutamate + ADP + phosphate + 2 H(+)</text>
        <dbReference type="Rhea" id="RHEA:14513"/>
        <dbReference type="Rhea" id="RHEA-COMP:9674"/>
        <dbReference type="Rhea" id="RHEA-COMP:9677"/>
        <dbReference type="ChEBI" id="CHEBI:15377"/>
        <dbReference type="ChEBI" id="CHEBI:15378"/>
        <dbReference type="ChEBI" id="CHEBI:29985"/>
        <dbReference type="ChEBI" id="CHEBI:30616"/>
        <dbReference type="ChEBI" id="CHEBI:43474"/>
        <dbReference type="ChEBI" id="CHEBI:58359"/>
        <dbReference type="ChEBI" id="CHEBI:78515"/>
        <dbReference type="ChEBI" id="CHEBI:78516"/>
        <dbReference type="ChEBI" id="CHEBI:456216"/>
    </reaction>
</comment>
<comment type="subunit">
    <text evidence="1">Heterotrimer of A, B and C subunits.</text>
</comment>
<comment type="similarity">
    <text evidence="1">Belongs to the GatC family.</text>
</comment>
<protein>
    <recommendedName>
        <fullName>Glutamyl-tRNA(Gln) amidotransferase subunit C</fullName>
        <shortName>Glu-ADT subunit C</shortName>
        <ecNumber evidence="1">6.3.5.-</ecNumber>
    </recommendedName>
</protein>
<gene>
    <name evidence="1" type="primary">gatC</name>
    <name type="ordered locus">PA4482</name>
</gene>
<reference key="1">
    <citation type="journal article" date="2000" name="Nature">
        <title>Complete genome sequence of Pseudomonas aeruginosa PAO1, an opportunistic pathogen.</title>
        <authorList>
            <person name="Stover C.K."/>
            <person name="Pham X.-Q.T."/>
            <person name="Erwin A.L."/>
            <person name="Mizoguchi S.D."/>
            <person name="Warrener P."/>
            <person name="Hickey M.J."/>
            <person name="Brinkman F.S.L."/>
            <person name="Hufnagle W.O."/>
            <person name="Kowalik D.J."/>
            <person name="Lagrou M."/>
            <person name="Garber R.L."/>
            <person name="Goltry L."/>
            <person name="Tolentino E."/>
            <person name="Westbrock-Wadman S."/>
            <person name="Yuan Y."/>
            <person name="Brody L.L."/>
            <person name="Coulter S.N."/>
            <person name="Folger K.R."/>
            <person name="Kas A."/>
            <person name="Larbig K."/>
            <person name="Lim R.M."/>
            <person name="Smith K.A."/>
            <person name="Spencer D.H."/>
            <person name="Wong G.K.-S."/>
            <person name="Wu Z."/>
            <person name="Paulsen I.T."/>
            <person name="Reizer J."/>
            <person name="Saier M.H. Jr."/>
            <person name="Hancock R.E.W."/>
            <person name="Lory S."/>
            <person name="Olson M.V."/>
        </authorList>
    </citation>
    <scope>NUCLEOTIDE SEQUENCE [LARGE SCALE GENOMIC DNA]</scope>
    <source>
        <strain>ATCC 15692 / DSM 22644 / CIP 104116 / JCM 14847 / LMG 12228 / 1C / PRS 101 / PAO1</strain>
    </source>
</reference>
<evidence type="ECO:0000255" key="1">
    <source>
        <dbReference type="HAMAP-Rule" id="MF_00122"/>
    </source>
</evidence>
<feature type="chain" id="PRO_0000105321" description="Glutamyl-tRNA(Gln) amidotransferase subunit C">
    <location>
        <begin position="1"/>
        <end position="96"/>
    </location>
</feature>
<dbReference type="EC" id="6.3.5.-" evidence="1"/>
<dbReference type="EMBL" id="AE004091">
    <property type="protein sequence ID" value="AAG07870.1"/>
    <property type="molecule type" value="Genomic_DNA"/>
</dbReference>
<dbReference type="PIR" id="G83084">
    <property type="entry name" value="G83084"/>
</dbReference>
<dbReference type="RefSeq" id="NP_253172.1">
    <property type="nucleotide sequence ID" value="NC_002516.2"/>
</dbReference>
<dbReference type="RefSeq" id="WP_003106543.1">
    <property type="nucleotide sequence ID" value="NZ_QZGE01000004.1"/>
</dbReference>
<dbReference type="PDB" id="4WJ3">
    <property type="method" value="X-ray"/>
    <property type="resolution" value="3.70 A"/>
    <property type="chains" value="C/F/I/L=1-96"/>
</dbReference>
<dbReference type="PDBsum" id="4WJ3"/>
<dbReference type="SMR" id="Q9HVT9"/>
<dbReference type="STRING" id="208964.PA4482"/>
<dbReference type="PaxDb" id="208964-PA4482"/>
<dbReference type="DNASU" id="881166"/>
<dbReference type="GeneID" id="881166"/>
<dbReference type="KEGG" id="pae:PA4482"/>
<dbReference type="PATRIC" id="fig|208964.12.peg.4692"/>
<dbReference type="PseudoCAP" id="PA4482"/>
<dbReference type="HOGENOM" id="CLU_105899_2_2_6"/>
<dbReference type="InParanoid" id="Q9HVT9"/>
<dbReference type="OrthoDB" id="9794326at2"/>
<dbReference type="PhylomeDB" id="Q9HVT9"/>
<dbReference type="BioCyc" id="PAER208964:G1FZ6-4571-MONOMER"/>
<dbReference type="EvolutionaryTrace" id="Q9HVT9"/>
<dbReference type="Proteomes" id="UP000002438">
    <property type="component" value="Chromosome"/>
</dbReference>
<dbReference type="GO" id="GO:0050566">
    <property type="term" value="F:asparaginyl-tRNA synthase (glutamine-hydrolyzing) activity"/>
    <property type="evidence" value="ECO:0007669"/>
    <property type="project" value="RHEA"/>
</dbReference>
<dbReference type="GO" id="GO:0005524">
    <property type="term" value="F:ATP binding"/>
    <property type="evidence" value="ECO:0007669"/>
    <property type="project" value="UniProtKB-KW"/>
</dbReference>
<dbReference type="GO" id="GO:0050567">
    <property type="term" value="F:glutaminyl-tRNA synthase (glutamine-hydrolyzing) activity"/>
    <property type="evidence" value="ECO:0007669"/>
    <property type="project" value="UniProtKB-UniRule"/>
</dbReference>
<dbReference type="GO" id="GO:0070681">
    <property type="term" value="P:glutaminyl-tRNAGln biosynthesis via transamidation"/>
    <property type="evidence" value="ECO:0000318"/>
    <property type="project" value="GO_Central"/>
</dbReference>
<dbReference type="GO" id="GO:0006450">
    <property type="term" value="P:regulation of translational fidelity"/>
    <property type="evidence" value="ECO:0007669"/>
    <property type="project" value="InterPro"/>
</dbReference>
<dbReference type="GO" id="GO:0006412">
    <property type="term" value="P:translation"/>
    <property type="evidence" value="ECO:0007669"/>
    <property type="project" value="UniProtKB-UniRule"/>
</dbReference>
<dbReference type="Gene3D" id="1.10.20.60">
    <property type="entry name" value="Glu-tRNAGln amidotransferase C subunit, N-terminal domain"/>
    <property type="match status" value="1"/>
</dbReference>
<dbReference type="HAMAP" id="MF_00122">
    <property type="entry name" value="GatC"/>
    <property type="match status" value="1"/>
</dbReference>
<dbReference type="InterPro" id="IPR036113">
    <property type="entry name" value="Asp/Glu-ADT_sf_sub_c"/>
</dbReference>
<dbReference type="InterPro" id="IPR003837">
    <property type="entry name" value="GatC"/>
</dbReference>
<dbReference type="NCBIfam" id="TIGR00135">
    <property type="entry name" value="gatC"/>
    <property type="match status" value="1"/>
</dbReference>
<dbReference type="PANTHER" id="PTHR15004">
    <property type="entry name" value="GLUTAMYL-TRNA(GLN) AMIDOTRANSFERASE SUBUNIT C, MITOCHONDRIAL"/>
    <property type="match status" value="1"/>
</dbReference>
<dbReference type="PANTHER" id="PTHR15004:SF0">
    <property type="entry name" value="GLUTAMYL-TRNA(GLN) AMIDOTRANSFERASE SUBUNIT C, MITOCHONDRIAL"/>
    <property type="match status" value="1"/>
</dbReference>
<dbReference type="Pfam" id="PF02686">
    <property type="entry name" value="GatC"/>
    <property type="match status" value="1"/>
</dbReference>
<dbReference type="SUPFAM" id="SSF141000">
    <property type="entry name" value="Glu-tRNAGln amidotransferase C subunit"/>
    <property type="match status" value="1"/>
</dbReference>
<accession>Q9HVT9</accession>
<sequence>MALERSDVEKIAHLARLGLSEADLPRTTETLNNILGLIDQMQAVDTSGVEPLAHPLEATQRLRPDAVTETDHRDAYQTIAPAVEEGLYLVPKVIES</sequence>
<organism>
    <name type="scientific">Pseudomonas aeruginosa (strain ATCC 15692 / DSM 22644 / CIP 104116 / JCM 14847 / LMG 12228 / 1C / PRS 101 / PAO1)</name>
    <dbReference type="NCBI Taxonomy" id="208964"/>
    <lineage>
        <taxon>Bacteria</taxon>
        <taxon>Pseudomonadati</taxon>
        <taxon>Pseudomonadota</taxon>
        <taxon>Gammaproteobacteria</taxon>
        <taxon>Pseudomonadales</taxon>
        <taxon>Pseudomonadaceae</taxon>
        <taxon>Pseudomonas</taxon>
    </lineage>
</organism>